<dbReference type="EMBL" id="AY534242">
    <property type="protein sequence ID" value="AAT07091.1"/>
    <property type="molecule type" value="mRNA"/>
</dbReference>
<dbReference type="EMBL" id="AY534243">
    <property type="protein sequence ID" value="AAT07092.1"/>
    <property type="status" value="ALT_SEQ"/>
    <property type="molecule type" value="mRNA"/>
</dbReference>
<dbReference type="EMBL" id="AY358489">
    <property type="protein sequence ID" value="AAQ88853.1"/>
    <property type="molecule type" value="mRNA"/>
</dbReference>
<dbReference type="EMBL" id="AF233439">
    <property type="status" value="NOT_ANNOTATED_CDS"/>
    <property type="molecule type" value="Genomic_DNA"/>
</dbReference>
<dbReference type="EMBL" id="KF495715">
    <property type="status" value="NOT_ANNOTATED_CDS"/>
    <property type="molecule type" value="Genomic_DNA"/>
</dbReference>
<dbReference type="EMBL" id="CH471153">
    <property type="protein sequence ID" value="EAW80480.1"/>
    <property type="molecule type" value="Genomic_DNA"/>
</dbReference>
<dbReference type="CCDS" id="CCDS47763.2">
    <molecule id="Q6UX68-1"/>
</dbReference>
<dbReference type="RefSeq" id="NP_001276902.1">
    <property type="nucleotide sequence ID" value="NM_001289973.1"/>
</dbReference>
<dbReference type="RefSeq" id="NP_997294.3">
    <molecule id="Q6UX68-1"/>
    <property type="nucleotide sequence ID" value="NM_207411.5"/>
</dbReference>
<dbReference type="SMR" id="Q6UX68"/>
<dbReference type="BioGRID" id="133187">
    <property type="interactions" value="1"/>
</dbReference>
<dbReference type="FunCoup" id="Q6UX68">
    <property type="interactions" value="507"/>
</dbReference>
<dbReference type="IntAct" id="Q6UX68">
    <property type="interactions" value="1"/>
</dbReference>
<dbReference type="STRING" id="9606.ENSP00000483879"/>
<dbReference type="TCDB" id="2.A.112.1.14">
    <property type="family name" value="the kx blood-group antigen (kxa) family"/>
</dbReference>
<dbReference type="GlyGen" id="Q6UX68">
    <property type="glycosylation" value="5 sites, 1 O-linked glycan (4 sites)"/>
</dbReference>
<dbReference type="iPTMnet" id="Q6UX68"/>
<dbReference type="PhosphoSitePlus" id="Q6UX68"/>
<dbReference type="BioMuta" id="XKR5"/>
<dbReference type="DMDM" id="74738183"/>
<dbReference type="MassIVE" id="Q6UX68"/>
<dbReference type="PaxDb" id="9606-ENSP00000483879"/>
<dbReference type="PeptideAtlas" id="Q6UX68"/>
<dbReference type="ProteomicsDB" id="67569">
    <molecule id="Q6UX68-1"/>
</dbReference>
<dbReference type="Antibodypedia" id="74670">
    <property type="antibodies" value="8 antibodies from 4 providers"/>
</dbReference>
<dbReference type="DNASU" id="389610"/>
<dbReference type="Ensembl" id="ENST00000618742.3">
    <molecule id="Q6UX68-1"/>
    <property type="protein sequence ID" value="ENSP00000483879.1"/>
    <property type="gene ID" value="ENSG00000275591.5"/>
</dbReference>
<dbReference type="Ensembl" id="ENST00000618990.4">
    <molecule id="Q6UX68-3"/>
    <property type="protein sequence ID" value="ENSP00000485506.1"/>
    <property type="gene ID" value="ENSG00000275591.5"/>
</dbReference>
<dbReference type="GeneID" id="389610"/>
<dbReference type="KEGG" id="hsa:389610"/>
<dbReference type="MANE-Select" id="ENST00000618742.3">
    <property type="protein sequence ID" value="ENSP00000483879.1"/>
    <property type="RefSeq nucleotide sequence ID" value="NM_207411.5"/>
    <property type="RefSeq protein sequence ID" value="NP_997294.3"/>
</dbReference>
<dbReference type="UCSC" id="uc033baq.2">
    <property type="organism name" value="human"/>
</dbReference>
<dbReference type="AGR" id="HGNC:20782"/>
<dbReference type="CTD" id="389610"/>
<dbReference type="GeneCards" id="XKR5"/>
<dbReference type="HGNC" id="HGNC:20782">
    <property type="gene designation" value="XKR5"/>
</dbReference>
<dbReference type="HPA" id="ENSG00000275591">
    <property type="expression patterns" value="Not detected"/>
</dbReference>
<dbReference type="neXtProt" id="NX_Q6UX68"/>
<dbReference type="OpenTargets" id="ENSG00000275591"/>
<dbReference type="PharmGKB" id="PA142670564"/>
<dbReference type="VEuPathDB" id="HostDB:ENSG00000275591"/>
<dbReference type="eggNOG" id="KOG4790">
    <property type="taxonomic scope" value="Eukaryota"/>
</dbReference>
<dbReference type="GeneTree" id="ENSGT01120000271929"/>
<dbReference type="InParanoid" id="Q6UX68"/>
<dbReference type="OMA" id="VDSTCHW"/>
<dbReference type="OrthoDB" id="6348184at2759"/>
<dbReference type="PAN-GO" id="Q6UX68">
    <property type="GO annotations" value="4 GO annotations based on evolutionary models"/>
</dbReference>
<dbReference type="PhylomeDB" id="Q6UX68"/>
<dbReference type="PathwayCommons" id="Q6UX68"/>
<dbReference type="SignaLink" id="Q6UX68"/>
<dbReference type="BioGRID-ORCS" id="389610">
    <property type="hits" value="0 hits in 183 CRISPR screens"/>
</dbReference>
<dbReference type="GenomeRNAi" id="389610"/>
<dbReference type="Pharos" id="Q6UX68">
    <property type="development level" value="Tdark"/>
</dbReference>
<dbReference type="PRO" id="PR:Q6UX68"/>
<dbReference type="Proteomes" id="UP000005640">
    <property type="component" value="Chromosome 8"/>
</dbReference>
<dbReference type="RNAct" id="Q6UX68">
    <property type="molecule type" value="protein"/>
</dbReference>
<dbReference type="Bgee" id="ENSG00000275591">
    <property type="expression patterns" value="Expressed in stromal cell of endometrium and 20 other cell types or tissues"/>
</dbReference>
<dbReference type="GO" id="GO:0016020">
    <property type="term" value="C:membrane"/>
    <property type="evidence" value="ECO:0000318"/>
    <property type="project" value="GO_Central"/>
</dbReference>
<dbReference type="GO" id="GO:0005886">
    <property type="term" value="C:plasma membrane"/>
    <property type="evidence" value="ECO:0000250"/>
    <property type="project" value="UniProtKB"/>
</dbReference>
<dbReference type="InterPro" id="IPR018629">
    <property type="entry name" value="XK-rel"/>
</dbReference>
<dbReference type="InterPro" id="IPR050895">
    <property type="entry name" value="XK-related_scramblase"/>
</dbReference>
<dbReference type="PANTHER" id="PTHR16024">
    <property type="entry name" value="XK-RELATED PROTEIN"/>
    <property type="match status" value="1"/>
</dbReference>
<dbReference type="PANTHER" id="PTHR16024:SF15">
    <property type="entry name" value="XK-RELATED PROTEIN 5"/>
    <property type="match status" value="1"/>
</dbReference>
<dbReference type="Pfam" id="PF09815">
    <property type="entry name" value="XK-related"/>
    <property type="match status" value="1"/>
</dbReference>
<protein>
    <recommendedName>
        <fullName evidence="6">XK-related protein 5</fullName>
    </recommendedName>
</protein>
<gene>
    <name evidence="7" type="primary">XKR5</name>
    <name evidence="5" type="synonym">XRG5</name>
    <name evidence="4" type="ORF">UNQ2754/PRO6493</name>
</gene>
<keyword id="KW-0025">Alternative splicing</keyword>
<keyword id="KW-1003">Cell membrane</keyword>
<keyword id="KW-0472">Membrane</keyword>
<keyword id="KW-1267">Proteomics identification</keyword>
<keyword id="KW-1185">Reference proteome</keyword>
<keyword id="KW-0812">Transmembrane</keyword>
<keyword id="KW-1133">Transmembrane helix</keyword>
<reference key="1">
    <citation type="submission" date="2004-01" db="EMBL/GenBank/DDBJ databases">
        <title>A superfamily of XK-related genes (XRG) widely expressed in vertebrates and invertebrates.</title>
        <authorList>
            <person name="Huang C.-H."/>
            <person name="Chen Y."/>
        </authorList>
    </citation>
    <scope>NUCLEOTIDE SEQUENCE [MRNA] (ISOFORMS 1 AND 2)</scope>
</reference>
<reference key="2">
    <citation type="journal article" date="2003" name="Genome Res.">
        <title>The secreted protein discovery initiative (SPDI), a large-scale effort to identify novel human secreted and transmembrane proteins: a bioinformatics assessment.</title>
        <authorList>
            <person name="Clark H.F."/>
            <person name="Gurney A.L."/>
            <person name="Abaya E."/>
            <person name="Baker K."/>
            <person name="Baldwin D.T."/>
            <person name="Brush J."/>
            <person name="Chen J."/>
            <person name="Chow B."/>
            <person name="Chui C."/>
            <person name="Crowley C."/>
            <person name="Currell B."/>
            <person name="Deuel B."/>
            <person name="Dowd P."/>
            <person name="Eaton D."/>
            <person name="Foster J.S."/>
            <person name="Grimaldi C."/>
            <person name="Gu Q."/>
            <person name="Hass P.E."/>
            <person name="Heldens S."/>
            <person name="Huang A."/>
            <person name="Kim H.S."/>
            <person name="Klimowski L."/>
            <person name="Jin Y."/>
            <person name="Johnson S."/>
            <person name="Lee J."/>
            <person name="Lewis L."/>
            <person name="Liao D."/>
            <person name="Mark M.R."/>
            <person name="Robbie E."/>
            <person name="Sanchez C."/>
            <person name="Schoenfeld J."/>
            <person name="Seshagiri S."/>
            <person name="Simmons L."/>
            <person name="Singh J."/>
            <person name="Smith V."/>
            <person name="Stinson J."/>
            <person name="Vagts A."/>
            <person name="Vandlen R.L."/>
            <person name="Watanabe C."/>
            <person name="Wieand D."/>
            <person name="Woods K."/>
            <person name="Xie M.-H."/>
            <person name="Yansura D.G."/>
            <person name="Yi S."/>
            <person name="Yu G."/>
            <person name="Yuan J."/>
            <person name="Zhang M."/>
            <person name="Zhang Z."/>
            <person name="Goddard A.D."/>
            <person name="Wood W.I."/>
            <person name="Godowski P.J."/>
            <person name="Gray A.M."/>
        </authorList>
    </citation>
    <scope>NUCLEOTIDE SEQUENCE [LARGE SCALE MRNA] (ISOFORM 1)</scope>
</reference>
<reference key="3">
    <citation type="journal article" date="2006" name="Nature">
        <title>DNA sequence and analysis of human chromosome 8.</title>
        <authorList>
            <person name="Nusbaum C."/>
            <person name="Mikkelsen T.S."/>
            <person name="Zody M.C."/>
            <person name="Asakawa S."/>
            <person name="Taudien S."/>
            <person name="Garber M."/>
            <person name="Kodira C.D."/>
            <person name="Schueler M.G."/>
            <person name="Shimizu A."/>
            <person name="Whittaker C.A."/>
            <person name="Chang J.L."/>
            <person name="Cuomo C.A."/>
            <person name="Dewar K."/>
            <person name="FitzGerald M.G."/>
            <person name="Yang X."/>
            <person name="Allen N.R."/>
            <person name="Anderson S."/>
            <person name="Asakawa T."/>
            <person name="Blechschmidt K."/>
            <person name="Bloom T."/>
            <person name="Borowsky M.L."/>
            <person name="Butler J."/>
            <person name="Cook A."/>
            <person name="Corum B."/>
            <person name="DeArellano K."/>
            <person name="DeCaprio D."/>
            <person name="Dooley K.T."/>
            <person name="Dorris L. III"/>
            <person name="Engels R."/>
            <person name="Gloeckner G."/>
            <person name="Hafez N."/>
            <person name="Hagopian D.S."/>
            <person name="Hall J.L."/>
            <person name="Ishikawa S.K."/>
            <person name="Jaffe D.B."/>
            <person name="Kamat A."/>
            <person name="Kudoh J."/>
            <person name="Lehmann R."/>
            <person name="Lokitsang T."/>
            <person name="Macdonald P."/>
            <person name="Major J.E."/>
            <person name="Matthews C.D."/>
            <person name="Mauceli E."/>
            <person name="Menzel U."/>
            <person name="Mihalev A.H."/>
            <person name="Minoshima S."/>
            <person name="Murayama Y."/>
            <person name="Naylor J.W."/>
            <person name="Nicol R."/>
            <person name="Nguyen C."/>
            <person name="O'Leary S.B."/>
            <person name="O'Neill K."/>
            <person name="Parker S.C.J."/>
            <person name="Polley A."/>
            <person name="Raymond C.K."/>
            <person name="Reichwald K."/>
            <person name="Rodriguez J."/>
            <person name="Sasaki T."/>
            <person name="Schilhabel M."/>
            <person name="Siddiqui R."/>
            <person name="Smith C.L."/>
            <person name="Sneddon T.P."/>
            <person name="Talamas J.A."/>
            <person name="Tenzin P."/>
            <person name="Topham K."/>
            <person name="Venkataraman V."/>
            <person name="Wen G."/>
            <person name="Yamazaki S."/>
            <person name="Young S.K."/>
            <person name="Zeng Q."/>
            <person name="Zimmer A.R."/>
            <person name="Rosenthal A."/>
            <person name="Birren B.W."/>
            <person name="Platzer M."/>
            <person name="Shimizu N."/>
            <person name="Lander E.S."/>
        </authorList>
    </citation>
    <scope>NUCLEOTIDE SEQUENCE [LARGE SCALE GENOMIC DNA]</scope>
</reference>
<reference key="4">
    <citation type="submission" date="2005-07" db="EMBL/GenBank/DDBJ databases">
        <authorList>
            <person name="Mural R.J."/>
            <person name="Istrail S."/>
            <person name="Sutton G.G."/>
            <person name="Florea L."/>
            <person name="Halpern A.L."/>
            <person name="Mobarry C.M."/>
            <person name="Lippert R."/>
            <person name="Walenz B."/>
            <person name="Shatkay H."/>
            <person name="Dew I."/>
            <person name="Miller J.R."/>
            <person name="Flanigan M.J."/>
            <person name="Edwards N.J."/>
            <person name="Bolanos R."/>
            <person name="Fasulo D."/>
            <person name="Halldorsson B.V."/>
            <person name="Hannenhalli S."/>
            <person name="Turner R."/>
            <person name="Yooseph S."/>
            <person name="Lu F."/>
            <person name="Nusskern D.R."/>
            <person name="Shue B.C."/>
            <person name="Zheng X.H."/>
            <person name="Zhong F."/>
            <person name="Delcher A.L."/>
            <person name="Huson D.H."/>
            <person name="Kravitz S.A."/>
            <person name="Mouchard L."/>
            <person name="Reinert K."/>
            <person name="Remington K.A."/>
            <person name="Clark A.G."/>
            <person name="Waterman M.S."/>
            <person name="Eichler E.E."/>
            <person name="Adams M.D."/>
            <person name="Hunkapiller M.W."/>
            <person name="Myers E.W."/>
            <person name="Venter J.C."/>
        </authorList>
    </citation>
    <scope>NUCLEOTIDE SEQUENCE [LARGE SCALE GENOMIC DNA]</scope>
</reference>
<comment type="subcellular location">
    <subcellularLocation>
        <location evidence="1">Cell membrane</location>
        <topology evidence="2">Multi-pass membrane protein</topology>
    </subcellularLocation>
</comment>
<comment type="alternative products">
    <event type="alternative splicing"/>
    <isoform>
        <id>Q6UX68-1</id>
        <name>1</name>
        <name evidence="5">5a</name>
        <sequence type="displayed"/>
    </isoform>
    <isoform>
        <id>Q6UX68-3</id>
        <name>2</name>
        <sequence type="described" ref="VSP_059371 VSP_059372"/>
    </isoform>
</comment>
<comment type="miscellaneous">
    <molecule>Isoform 2</molecule>
    <text evidence="6">May be produced at very low levels due to a premature stop codon in the mRNA, leading to nonsense-mediated mRNA decay.</text>
</comment>
<comment type="similarity">
    <text evidence="6">Belongs to the XK family.</text>
</comment>
<comment type="sequence caution" evidence="6">
    <conflict type="erroneous translation">
        <sequence resource="EMBL-CDS" id="AAT07092"/>
    </conflict>
    <text>Wrong choice of CDS.</text>
</comment>
<sequence>MHARLLGLSALLQAAEQSARLYTVAYYFTTGRLLWGWLALAVLLPGFLVQALSYLWFRADGHPGHCSLMMLHLLQLGVWKRHWDAALTSLQKELEAPHRGWLQLQEADLSALRLLEALLQTGPHLLLQTYVFLASDFTDIVPGVSTLFSWSSLSWALVSYTRFMGFMKPGHLAMPWAALFCQQLWRMGMLGTRVLSLVLFYKAYHFWVFVVAGAHWLVMTFWLVAQQSDIIDSTCHWRLFNLLVGAVYILCYLSFWDSPSRNRMVTFYMVMLLENIILLLLATDFLQGASWTSLQTIAGVLSGFLIGSVSLVIYYSLLHPKSTDIWQGCLRKSCGIAGGDKTERRDSPRATDLAGKRTESSGSCQGASYEPTILGKPPTPEQVPPEAGLGTQVAVEDSFLSHHHWLWVKLALKTGNVSKINAAFGDNSPAYCPPAWGLSQQDYLQRKALSAQQELPSSSRDPSTLENSSAFEGVPKAEADPLETSSYVSFASDQQDEAPTQNPAATQGEGTPKEGADAVSGTQGKGTGGQQRGGEGQQSSTLYFSATAEVATSSQQEGSPATLQTAHSGRRLGKSSPAQPASPHPVGLAPFPDTMADISPILGTGPCRGFCPSAGFPGRTLSISELEEPLEPKRELSHHAAVGVWVSLPQLRTAHEPCLTSTPKSESIQTDCSCREQMKQEPSFFI</sequence>
<feature type="chain" id="PRO_0000190782" description="XK-related protein 5">
    <location>
        <begin position="1"/>
        <end position="686"/>
    </location>
</feature>
<feature type="transmembrane region" description="Helical" evidence="2">
    <location>
        <begin position="33"/>
        <end position="53"/>
    </location>
</feature>
<feature type="transmembrane region" description="Helical" evidence="2">
    <location>
        <begin position="205"/>
        <end position="225"/>
    </location>
</feature>
<feature type="transmembrane region" description="Helical" evidence="2">
    <location>
        <begin position="239"/>
        <end position="259"/>
    </location>
</feature>
<feature type="transmembrane region" description="Helical" evidence="2">
    <location>
        <begin position="265"/>
        <end position="285"/>
    </location>
</feature>
<feature type="transmembrane region" description="Helical" evidence="2">
    <location>
        <begin position="297"/>
        <end position="317"/>
    </location>
</feature>
<feature type="region of interest" description="Disordered" evidence="3">
    <location>
        <begin position="339"/>
        <end position="387"/>
    </location>
</feature>
<feature type="region of interest" description="Disordered" evidence="3">
    <location>
        <begin position="448"/>
        <end position="468"/>
    </location>
</feature>
<feature type="region of interest" description="Disordered" evidence="3">
    <location>
        <begin position="490"/>
        <end position="592"/>
    </location>
</feature>
<feature type="compositionally biased region" description="Basic and acidic residues" evidence="3">
    <location>
        <begin position="340"/>
        <end position="359"/>
    </location>
</feature>
<feature type="compositionally biased region" description="Polar residues" evidence="3">
    <location>
        <begin position="450"/>
        <end position="468"/>
    </location>
</feature>
<feature type="compositionally biased region" description="Polar residues" evidence="3">
    <location>
        <begin position="490"/>
        <end position="509"/>
    </location>
</feature>
<feature type="compositionally biased region" description="Gly residues" evidence="3">
    <location>
        <begin position="523"/>
        <end position="536"/>
    </location>
</feature>
<feature type="compositionally biased region" description="Polar residues" evidence="3">
    <location>
        <begin position="550"/>
        <end position="567"/>
    </location>
</feature>
<feature type="splice variant" id="VSP_059371" description="In isoform 2.">
    <original>HWDAA</original>
    <variation>PQIHL</variation>
    <location>
        <begin position="82"/>
        <end position="86"/>
    </location>
</feature>
<feature type="splice variant" id="VSP_059372" description="In isoform 2.">
    <location>
        <begin position="87"/>
        <end position="686"/>
    </location>
</feature>
<feature type="sequence conflict" description="In Ref. 1; AAT07091 and 2; AAQ88853." ref="1 2">
    <original>M</original>
    <variation>V</variation>
    <location>
        <position position="69"/>
    </location>
</feature>
<proteinExistence type="evidence at protein level"/>
<evidence type="ECO:0000250" key="1">
    <source>
        <dbReference type="UniProtKB" id="Q5GH66"/>
    </source>
</evidence>
<evidence type="ECO:0000255" key="2"/>
<evidence type="ECO:0000256" key="3">
    <source>
        <dbReference type="SAM" id="MobiDB-lite"/>
    </source>
</evidence>
<evidence type="ECO:0000303" key="4">
    <source>
    </source>
</evidence>
<evidence type="ECO:0000303" key="5">
    <source ref="1"/>
</evidence>
<evidence type="ECO:0000305" key="6"/>
<evidence type="ECO:0000312" key="7">
    <source>
        <dbReference type="HGNC" id="HGNC:20782"/>
    </source>
</evidence>
<accession>Q6UX68</accession>
<accession>A0A087X143</accession>
<accession>A0A096LPC1</accession>
<accession>Q5GH74</accession>
<organism>
    <name type="scientific">Homo sapiens</name>
    <name type="common">Human</name>
    <dbReference type="NCBI Taxonomy" id="9606"/>
    <lineage>
        <taxon>Eukaryota</taxon>
        <taxon>Metazoa</taxon>
        <taxon>Chordata</taxon>
        <taxon>Craniata</taxon>
        <taxon>Vertebrata</taxon>
        <taxon>Euteleostomi</taxon>
        <taxon>Mammalia</taxon>
        <taxon>Eutheria</taxon>
        <taxon>Euarchontoglires</taxon>
        <taxon>Primates</taxon>
        <taxon>Haplorrhini</taxon>
        <taxon>Catarrhini</taxon>
        <taxon>Hominidae</taxon>
        <taxon>Homo</taxon>
    </lineage>
</organism>
<name>XKR5_HUMAN</name>